<name>LAH_ASPFU</name>
<feature type="chain" id="PRO_0000455966" description="Leashin">
    <location>
        <begin position="1"/>
        <end position="5538"/>
    </location>
</feature>
<feature type="region of interest" description="Woronin bodies-binding region" evidence="3">
    <location>
        <begin position="1"/>
        <end position="1100"/>
    </location>
</feature>
<feature type="region of interest" description="Disordered" evidence="2">
    <location>
        <begin position="1"/>
        <end position="270"/>
    </location>
</feature>
<feature type="region of interest" description="Disordered" evidence="2">
    <location>
        <begin position="286"/>
        <end position="315"/>
    </location>
</feature>
<feature type="region of interest" description="Disordered" evidence="2">
    <location>
        <begin position="331"/>
        <end position="365"/>
    </location>
</feature>
<feature type="region of interest" description="Disordered" evidence="2">
    <location>
        <begin position="510"/>
        <end position="555"/>
    </location>
</feature>
<feature type="region of interest" description="Disordered" evidence="2">
    <location>
        <begin position="596"/>
        <end position="712"/>
    </location>
</feature>
<feature type="region of interest" description="Disordered" evidence="2">
    <location>
        <begin position="800"/>
        <end position="901"/>
    </location>
</feature>
<feature type="region of interest" description="Disordered" evidence="2">
    <location>
        <begin position="913"/>
        <end position="944"/>
    </location>
</feature>
<feature type="region of interest" description="Disordered" evidence="2">
    <location>
        <begin position="1027"/>
        <end position="1145"/>
    </location>
</feature>
<feature type="region of interest" description="Disordered" evidence="2">
    <location>
        <begin position="1164"/>
        <end position="1297"/>
    </location>
</feature>
<feature type="region of interest" description="Disordered" evidence="2">
    <location>
        <begin position="1310"/>
        <end position="1398"/>
    </location>
</feature>
<feature type="region of interest" description="Disordered" evidence="2">
    <location>
        <begin position="1432"/>
        <end position="1993"/>
    </location>
</feature>
<feature type="region of interest" description="Disordered" evidence="2">
    <location>
        <begin position="2067"/>
        <end position="2146"/>
    </location>
</feature>
<feature type="region of interest" description="Disordered" evidence="2">
    <location>
        <begin position="2165"/>
        <end position="2207"/>
    </location>
</feature>
<feature type="region of interest" description="Disordered" evidence="2">
    <location>
        <begin position="2233"/>
        <end position="3065"/>
    </location>
</feature>
<feature type="region of interest" description="Disordered" evidence="2">
    <location>
        <begin position="3077"/>
        <end position="3894"/>
    </location>
</feature>
<feature type="region of interest" description="Disordered" evidence="2">
    <location>
        <begin position="3910"/>
        <end position="4034"/>
    </location>
</feature>
<feature type="region of interest" description="Disordered" evidence="2">
    <location>
        <begin position="4072"/>
        <end position="4128"/>
    </location>
</feature>
<feature type="region of interest" description="Disordered" evidence="2">
    <location>
        <begin position="4238"/>
        <end position="4421"/>
    </location>
</feature>
<feature type="region of interest" description="Disordered" evidence="2">
    <location>
        <begin position="4442"/>
        <end position="4463"/>
    </location>
</feature>
<feature type="region of interest" description="Septal pore-binding region" evidence="3">
    <location>
        <begin position="4495"/>
        <end position="5538"/>
    </location>
</feature>
<feature type="region of interest" description="Disordered" evidence="2">
    <location>
        <begin position="4509"/>
        <end position="4698"/>
    </location>
</feature>
<feature type="region of interest" description="Disordered" evidence="2">
    <location>
        <begin position="4733"/>
        <end position="4850"/>
    </location>
</feature>
<feature type="region of interest" description="Disordered" evidence="2">
    <location>
        <begin position="4910"/>
        <end position="5052"/>
    </location>
</feature>
<feature type="coiled-coil region" evidence="1">
    <location>
        <begin position="5050"/>
        <end position="5223"/>
    </location>
</feature>
<feature type="compositionally biased region" description="Gly residues" evidence="2">
    <location>
        <begin position="1"/>
        <end position="10"/>
    </location>
</feature>
<feature type="compositionally biased region" description="Low complexity" evidence="2">
    <location>
        <begin position="14"/>
        <end position="23"/>
    </location>
</feature>
<feature type="compositionally biased region" description="Basic and acidic residues" evidence="2">
    <location>
        <begin position="42"/>
        <end position="51"/>
    </location>
</feature>
<feature type="compositionally biased region" description="Basic and acidic residues" evidence="2">
    <location>
        <begin position="89"/>
        <end position="167"/>
    </location>
</feature>
<feature type="compositionally biased region" description="Polar residues" evidence="2">
    <location>
        <begin position="299"/>
        <end position="313"/>
    </location>
</feature>
<feature type="compositionally biased region" description="Pro residues" evidence="2">
    <location>
        <begin position="334"/>
        <end position="352"/>
    </location>
</feature>
<feature type="compositionally biased region" description="Basic residues" evidence="2">
    <location>
        <begin position="514"/>
        <end position="523"/>
    </location>
</feature>
<feature type="compositionally biased region" description="Polar residues" evidence="2">
    <location>
        <begin position="598"/>
        <end position="607"/>
    </location>
</feature>
<feature type="compositionally biased region" description="Basic residues" evidence="2">
    <location>
        <begin position="639"/>
        <end position="655"/>
    </location>
</feature>
<feature type="compositionally biased region" description="Low complexity" evidence="2">
    <location>
        <begin position="660"/>
        <end position="674"/>
    </location>
</feature>
<feature type="compositionally biased region" description="Basic residues" evidence="2">
    <location>
        <begin position="682"/>
        <end position="698"/>
    </location>
</feature>
<feature type="compositionally biased region" description="Basic and acidic residues" evidence="2">
    <location>
        <begin position="809"/>
        <end position="825"/>
    </location>
</feature>
<feature type="compositionally biased region" description="Low complexity" evidence="2">
    <location>
        <begin position="842"/>
        <end position="851"/>
    </location>
</feature>
<feature type="compositionally biased region" description="Low complexity" evidence="2">
    <location>
        <begin position="862"/>
        <end position="880"/>
    </location>
</feature>
<feature type="compositionally biased region" description="Basic residues" evidence="2">
    <location>
        <begin position="881"/>
        <end position="891"/>
    </location>
</feature>
<feature type="compositionally biased region" description="Basic and acidic residues" evidence="2">
    <location>
        <begin position="1068"/>
        <end position="1091"/>
    </location>
</feature>
<feature type="compositionally biased region" description="Basic and acidic residues" evidence="2">
    <location>
        <begin position="1098"/>
        <end position="1145"/>
    </location>
</feature>
<feature type="compositionally biased region" description="Basic and acidic residues" evidence="2">
    <location>
        <begin position="1178"/>
        <end position="1198"/>
    </location>
</feature>
<feature type="compositionally biased region" description="Basic and acidic residues" evidence="2">
    <location>
        <begin position="1207"/>
        <end position="1226"/>
    </location>
</feature>
<feature type="compositionally biased region" description="Basic and acidic residues" evidence="2">
    <location>
        <begin position="1356"/>
        <end position="1365"/>
    </location>
</feature>
<feature type="compositionally biased region" description="Basic and acidic residues" evidence="2">
    <location>
        <begin position="1375"/>
        <end position="1387"/>
    </location>
</feature>
<feature type="compositionally biased region" description="Basic and acidic residues" evidence="2">
    <location>
        <begin position="1447"/>
        <end position="1462"/>
    </location>
</feature>
<feature type="compositionally biased region" description="Basic and acidic residues" evidence="2">
    <location>
        <begin position="1478"/>
        <end position="1488"/>
    </location>
</feature>
<feature type="compositionally biased region" description="Low complexity" evidence="2">
    <location>
        <begin position="1506"/>
        <end position="1516"/>
    </location>
</feature>
<feature type="compositionally biased region" description="Basic and acidic residues" evidence="2">
    <location>
        <begin position="1521"/>
        <end position="1536"/>
    </location>
</feature>
<feature type="compositionally biased region" description="Basic and acidic residues" evidence="2">
    <location>
        <begin position="1549"/>
        <end position="1559"/>
    </location>
</feature>
<feature type="compositionally biased region" description="Basic and acidic residues" evidence="2">
    <location>
        <begin position="1572"/>
        <end position="1594"/>
    </location>
</feature>
<feature type="compositionally biased region" description="Basic residues" evidence="2">
    <location>
        <begin position="1639"/>
        <end position="1648"/>
    </location>
</feature>
<feature type="compositionally biased region" description="Basic and acidic residues" evidence="2">
    <location>
        <begin position="1672"/>
        <end position="1686"/>
    </location>
</feature>
<feature type="compositionally biased region" description="Basic and acidic residues" evidence="2">
    <location>
        <begin position="1700"/>
        <end position="1773"/>
    </location>
</feature>
<feature type="compositionally biased region" description="Basic and acidic residues" evidence="2">
    <location>
        <begin position="1788"/>
        <end position="1800"/>
    </location>
</feature>
<feature type="compositionally biased region" description="Low complexity" evidence="2">
    <location>
        <begin position="1867"/>
        <end position="1876"/>
    </location>
</feature>
<feature type="compositionally biased region" description="Low complexity" evidence="2">
    <location>
        <begin position="1889"/>
        <end position="1898"/>
    </location>
</feature>
<feature type="compositionally biased region" description="Basic and acidic residues" evidence="2">
    <location>
        <begin position="1950"/>
        <end position="1975"/>
    </location>
</feature>
<feature type="compositionally biased region" description="Polar residues" evidence="2">
    <location>
        <begin position="1984"/>
        <end position="1993"/>
    </location>
</feature>
<feature type="compositionally biased region" description="Polar residues" evidence="2">
    <location>
        <begin position="2121"/>
        <end position="2130"/>
    </location>
</feature>
<feature type="compositionally biased region" description="Basic and acidic residues" evidence="2">
    <location>
        <begin position="2187"/>
        <end position="2196"/>
    </location>
</feature>
<feature type="compositionally biased region" description="Basic and acidic residues" evidence="2">
    <location>
        <begin position="2269"/>
        <end position="2279"/>
    </location>
</feature>
<feature type="compositionally biased region" description="Basic and acidic residues" evidence="2">
    <location>
        <begin position="2307"/>
        <end position="2320"/>
    </location>
</feature>
<feature type="compositionally biased region" description="Polar residues" evidence="2">
    <location>
        <begin position="2321"/>
        <end position="2331"/>
    </location>
</feature>
<feature type="compositionally biased region" description="Basic residues" evidence="2">
    <location>
        <begin position="2344"/>
        <end position="2355"/>
    </location>
</feature>
<feature type="compositionally biased region" description="Polar residues" evidence="2">
    <location>
        <begin position="2358"/>
        <end position="2370"/>
    </location>
</feature>
<feature type="compositionally biased region" description="Basic and acidic residues" evidence="2">
    <location>
        <begin position="2427"/>
        <end position="2441"/>
    </location>
</feature>
<feature type="compositionally biased region" description="Low complexity" evidence="2">
    <location>
        <begin position="2449"/>
        <end position="2461"/>
    </location>
</feature>
<feature type="compositionally biased region" description="Basic residues" evidence="2">
    <location>
        <begin position="2473"/>
        <end position="2484"/>
    </location>
</feature>
<feature type="compositionally biased region" description="Polar residues" evidence="2">
    <location>
        <begin position="2494"/>
        <end position="2525"/>
    </location>
</feature>
<feature type="compositionally biased region" description="Basic and acidic residues" evidence="2">
    <location>
        <begin position="2580"/>
        <end position="2590"/>
    </location>
</feature>
<feature type="compositionally biased region" description="Basic and acidic residues" evidence="2">
    <location>
        <begin position="2647"/>
        <end position="2661"/>
    </location>
</feature>
<feature type="compositionally biased region" description="Basic and acidic residues" evidence="2">
    <location>
        <begin position="2677"/>
        <end position="2691"/>
    </location>
</feature>
<feature type="compositionally biased region" description="Low complexity" evidence="2">
    <location>
        <begin position="2719"/>
        <end position="2734"/>
    </location>
</feature>
<feature type="compositionally biased region" description="Basic residues" evidence="2">
    <location>
        <begin position="2735"/>
        <end position="2747"/>
    </location>
</feature>
<feature type="compositionally biased region" description="Basic and acidic residues" evidence="2">
    <location>
        <begin position="2796"/>
        <end position="2812"/>
    </location>
</feature>
<feature type="compositionally biased region" description="Basic residues" evidence="2">
    <location>
        <begin position="2874"/>
        <end position="2884"/>
    </location>
</feature>
<feature type="compositionally biased region" description="Polar residues" evidence="2">
    <location>
        <begin position="2885"/>
        <end position="2894"/>
    </location>
</feature>
<feature type="compositionally biased region" description="Basic residues" evidence="2">
    <location>
        <begin position="3003"/>
        <end position="3013"/>
    </location>
</feature>
<feature type="compositionally biased region" description="Basic residues" evidence="2">
    <location>
        <begin position="3089"/>
        <end position="3100"/>
    </location>
</feature>
<feature type="compositionally biased region" description="Basic and acidic residues" evidence="2">
    <location>
        <begin position="3145"/>
        <end position="3172"/>
    </location>
</feature>
<feature type="compositionally biased region" description="Low complexity" evidence="2">
    <location>
        <begin position="3248"/>
        <end position="3268"/>
    </location>
</feature>
<feature type="compositionally biased region" description="Polar residues" evidence="2">
    <location>
        <begin position="3293"/>
        <end position="3303"/>
    </location>
</feature>
<feature type="compositionally biased region" description="Basic residues" evidence="2">
    <location>
        <begin position="3329"/>
        <end position="3341"/>
    </location>
</feature>
<feature type="compositionally biased region" description="Basic and acidic residues" evidence="2">
    <location>
        <begin position="3347"/>
        <end position="3367"/>
    </location>
</feature>
<feature type="compositionally biased region" description="Low complexity" evidence="2">
    <location>
        <begin position="3397"/>
        <end position="3409"/>
    </location>
</feature>
<feature type="compositionally biased region" description="Low complexity" evidence="2">
    <location>
        <begin position="3422"/>
        <end position="3435"/>
    </location>
</feature>
<feature type="compositionally biased region" description="Basic residues" evidence="2">
    <location>
        <begin position="3436"/>
        <end position="3450"/>
    </location>
</feature>
<feature type="compositionally biased region" description="Basic and acidic residues" evidence="2">
    <location>
        <begin position="3480"/>
        <end position="3495"/>
    </location>
</feature>
<feature type="compositionally biased region" description="Low complexity" evidence="2">
    <location>
        <begin position="3547"/>
        <end position="3564"/>
    </location>
</feature>
<feature type="compositionally biased region" description="Polar residues" evidence="2">
    <location>
        <begin position="3565"/>
        <end position="3580"/>
    </location>
</feature>
<feature type="compositionally biased region" description="Polar residues" evidence="2">
    <location>
        <begin position="3604"/>
        <end position="3613"/>
    </location>
</feature>
<feature type="compositionally biased region" description="Basic residues" evidence="2">
    <location>
        <begin position="3642"/>
        <end position="3652"/>
    </location>
</feature>
<feature type="compositionally biased region" description="Basic residues" evidence="2">
    <location>
        <begin position="3716"/>
        <end position="3730"/>
    </location>
</feature>
<feature type="compositionally biased region" description="Polar residues" evidence="2">
    <location>
        <begin position="3768"/>
        <end position="3787"/>
    </location>
</feature>
<feature type="compositionally biased region" description="Basic and acidic residues" evidence="2">
    <location>
        <begin position="3800"/>
        <end position="3819"/>
    </location>
</feature>
<feature type="compositionally biased region" description="Polar residues" evidence="2">
    <location>
        <begin position="3823"/>
        <end position="3837"/>
    </location>
</feature>
<feature type="compositionally biased region" description="Basic and acidic residues" evidence="2">
    <location>
        <begin position="3876"/>
        <end position="3893"/>
    </location>
</feature>
<feature type="compositionally biased region" description="Polar residues" evidence="2">
    <location>
        <begin position="3915"/>
        <end position="3925"/>
    </location>
</feature>
<feature type="compositionally biased region" description="Polar residues" evidence="2">
    <location>
        <begin position="3965"/>
        <end position="3980"/>
    </location>
</feature>
<feature type="compositionally biased region" description="Acidic residues" evidence="2">
    <location>
        <begin position="4010"/>
        <end position="4020"/>
    </location>
</feature>
<feature type="compositionally biased region" description="Basic and acidic residues" evidence="2">
    <location>
        <begin position="4111"/>
        <end position="4123"/>
    </location>
</feature>
<feature type="compositionally biased region" description="Basic residues" evidence="2">
    <location>
        <begin position="4244"/>
        <end position="4255"/>
    </location>
</feature>
<feature type="compositionally biased region" description="Polar residues" evidence="2">
    <location>
        <begin position="4328"/>
        <end position="4345"/>
    </location>
</feature>
<feature type="compositionally biased region" description="Basic residues" evidence="2">
    <location>
        <begin position="4378"/>
        <end position="4391"/>
    </location>
</feature>
<feature type="compositionally biased region" description="Basic and acidic residues" evidence="2">
    <location>
        <begin position="4392"/>
        <end position="4406"/>
    </location>
</feature>
<feature type="compositionally biased region" description="Polar residues" evidence="2">
    <location>
        <begin position="4554"/>
        <end position="4570"/>
    </location>
</feature>
<feature type="compositionally biased region" description="Basic and acidic residues" evidence="2">
    <location>
        <begin position="4574"/>
        <end position="4591"/>
    </location>
</feature>
<feature type="compositionally biased region" description="Basic and acidic residues" evidence="2">
    <location>
        <begin position="4660"/>
        <end position="4673"/>
    </location>
</feature>
<feature type="compositionally biased region" description="Low complexity" evidence="2">
    <location>
        <begin position="4940"/>
        <end position="4954"/>
    </location>
</feature>
<feature type="compositionally biased region" description="Polar residues" evidence="2">
    <location>
        <begin position="4966"/>
        <end position="4988"/>
    </location>
</feature>
<feature type="compositionally biased region" description="Pro residues" evidence="2">
    <location>
        <begin position="4989"/>
        <end position="4998"/>
    </location>
</feature>
<organism>
    <name type="scientific">Aspergillus fumigatus (strain ATCC MYA-4609 / CBS 101355 / FGSC A1100 / Af293)</name>
    <name type="common">Neosartorya fumigata</name>
    <dbReference type="NCBI Taxonomy" id="330879"/>
    <lineage>
        <taxon>Eukaryota</taxon>
        <taxon>Fungi</taxon>
        <taxon>Dikarya</taxon>
        <taxon>Ascomycota</taxon>
        <taxon>Pezizomycotina</taxon>
        <taxon>Eurotiomycetes</taxon>
        <taxon>Eurotiomycetidae</taxon>
        <taxon>Eurotiales</taxon>
        <taxon>Aspergillaceae</taxon>
        <taxon>Aspergillus</taxon>
        <taxon>Aspergillus subgen. Fumigati</taxon>
    </lineage>
</organism>
<sequence length="5538" mass="603726">MFRALMGGGRSSDSRSTTSSSKSSSRRRTNSKASSTVSRKSSRGDDRDRGLGDLSAYSFSGSRSKRYAPSAAGDSVASSYATAEPGIAVEHDRIIIERTLKRRDTDEESGRDRYSEIRDRDGRSSRRRDRDRSQSRERERPRSERIERAQLEDDAVESRDRRRERSRTQPGDTYLPPVSPSMPIQPNSPLVYDPHVQQQFPGQFPAYVAEPYRPPNPAGEAADYYGDQGQSVADQPGVRPKPPPIIPSSQAHLMTASPVANPPPEPSSMGQVGAAAAYFADDAELEVDPAPGRPDRPTAGTTSEPPKPSNTTFGISGIAAGAAAYGAGGSLPLPASPTSPPEPVPTTAPYAPPVTSSTTKPPHTHGIGASVGAAAAGAAAGYMLGHHQHHSMSSADHLSQYTMQNYDESSQYGLGIPGPTVYNAPANAEWHAAGTGTAVPYAASPLHPHHAAVHHGAPFPSGSLAFQQRQRGPLDKFIDFWRDPEGVGMFEEYTEAIGVCKYCFEPGTSSRDAPRKHHYRQRRSSGERYASGSRVGKASRYTSSEDEGRRRKKSSRNSWLLPGLLGGIAAKALFNNKDFEDTYSVRSGRVMTVKDTESVSTARRSQTSRGVYRRRSQSRDRESRIIYSDSKSQYEDKRHRSRSRSHSSSRNRRHSALRDAAVGAAVGSGAIALAKSRDRSRSRSRSRSRFPRKSKGRKSSTSDSSSFLDISQPARKSVGGGIASFFTASSENRGKRRVKKRRSIFSFNNSSSSSLDADLAFGTGFARKPARKSTKKSSKKKDRDVDAALLGLGAAATALAATSHRRSRRAGEILVAKETRSRHSDYASSVTNDEGWEDLDSGDQSSSSVSSALAFGDTGLFGSDESQSSDSGTSKWGWRWGSKKNKKKKRASSPQGRFPTGAALAAGALGTAALASTQDRDSRLPRQHASSSSGSLQHVAPVPTNDPTLVDAVRVASLPHAEPAFVRPGPIPLQQPQPMTPVSQAVYATQGASIPTYAAPMAPPAFPPTSYIPYRPEQIQNVALGFNRPHHRSDSSPVFHTEPLEGVPAPGLKRRSTSKDQSSVQFDLTKEQADKERRMDRLEQLKRDAERASGVQLIDRDHEPTVRDDDRRSGRYEDRGYVDRRQDEPREDRYAMDSGKDKDSFSRVGAVAAGSIGAAAAATVLSGRSSVDESSETSQRRHEERRQQRRAERRRGSEPESAVSSRSKSERAQETTDYLPEERQPEPTKPPSPSRSPHKYDDYAEFFAPEELRYSPDTYKQRAPTSMPTIVEIEPASERQSREALLPAEESHPGYRDLPWPVPVLKLIEPTPPQSVSGSVRDAASPVGNPRDLPPHEEEEDVKPAARQTTGSRVSWGEHKTHEYEVPSTSSELESVDHETTREREQPHSPVLQQRYVSPKNAADDVGADIEFAAALAAATAAAGFNPALVTEDPTYHTWSSPPGSHGRVEYRDPWVETESKSRIPHGFVEGEVETPEEEKAPSSRVIEEQPLYSEPEPVSREPESQESSEPQTRTSIAQEVIDRLSEKQDERDGSRKALYGTEKSSNSGKERDESELRAQDSFSMPGGFETEELRSDPKRDVDSRDDGDVDRRSVASAPVSGEYDFSTRPRKSTQDSEYFDNGEDAGSASIEQDGSEGKKKRRKRRSKRDSDTFTDSASVESSPARIGQSSEKLKSMDDKDKEKKAGGFFSSIFGSRVSEPVDSKRSSSTDRPSRDVHSEIGRREYEESRRQRKEEKSSRRDEESGSDKENSKVRDKDGVDIENYKSSRQRREERRRRRYEDIVDSGKSGEYEKDRKLSEDNDENQSFLAEGPEMPAQIGDGDRGSGASGHVRLAEGAITGLGIGVLGQRPRGRSTPPEASERIMDPAPRSRSRPASPEPDRQEGDNQSQSSRRSSILRSKDSPTAVPLHFRRPPASPGTNRSVSVGTPTAPSPGSPTTPKRRPNSTEFKNSREMRPLWLVERHGPGHGEHKLEEPLPSLPSSKTSSANTSVEDLTALQDERSWEAVDLSHHVHGMRRLSGIDVSQSRGFEHDAFGSQHVTPTATTFEQIHPHSRKEKLKYEFHSPSELLQDPSPYGDVQPSNMGDLPSAEGSAVGVKDASSENEDSAELAAEALPPRPSTPQNNVTAASEDTETTPTQTRTVNAFEGPGFAGVVDAAVAAAVSNRLSTRPDVAIPDKSSPEDLPYDADRTHKPIADQELAATSPPAPGVPLGFAAVVDAAVAAATISIGGQPEAAKELEQSPEISEPIPQTPHPNEQETSHPTGNDSVPRDDKRRDSVDTVVPQAEEASDEKEKLDTSAVMPDLTGENKELPSEAKNENANDNSQAQTEQPPVDTDEPSSSSAKKKKKKNKKKRQSMDSNTQEPTTPVDDSTIDQGGVGISAVEDAQADAVETFEPAPKEQILVEQPASAEPTPAPEPEPTETTVDVEKAIEAPDVRKELEEEPAPAAPEDTPAEPTAETPAEDQAETSSSKKSKKKKKKKNKGSAPEENTEDPASTETPEASAANSQVVAAEQVESTLETTQPAEEEPKPTEESAIAVAENTVEPEPAPKEMEATEDPMFQDISVPGESQDSPADADNQAKELPHPEEEFQAEATHAQELPEDTEIINKTDDLSSGIDPSGQAGGDMVNEAASPEVWHDALASSPEDKNGEAEQADLKSNEPQNEGKAPVSELPALDKELSEISERPAEVDAPADTPLVDSPSTDQVEAADSGVQNEEPTPTAAELETPLSRKNSKKNKKKNKRKNTAETPVQNEAVHTADPISSIEGVPEPGPEATTTAVEEPQVTLPDEAVDENKGESRDVQAVKEETSPENAAEVANDSQPSTFEEIHLAGAEQSAPDAIAEIMGESQPAEPQDVLATAPEEPIDGQPKKKAKKKKNRKTANVSESQPESEAEAKTEKLQSAELAENPQPHIRDEVAGDSQVPPESGASEAPAGIEDVTPISAAEAVEFDLPVEKDETNGGEPHVSELNKQLNNETVPGPETGSEPVPEAGEITQSGKKSKKNKKKKQSLSLAPDETPASDPSTPAGTADGNADLPAAPEDSLKTDQEPMPEEPTVSQPIVDLVTETLNLSMAEEAVPMTAAQKKTKKEKKKKRQSALLDEPTATESIEEANAKDVTSEGTQMPLEVPSEPQSSGPTLDAIEHAEAAAEHSQEQPNKDVTLHADHSPNSDGEFVLVPEHVPYGSNDEHKTQPGSMELDVTQVNTELEKEPSTQEGVLEANEATPAETPSAADQHVQEESSPTPAMEGGAAAEELVAVEPDVLEGSQDKITEDNDTPDDSLTAKEPQTELVNAETTQKTEQGDVVLDVEAGSEGLVRDDQPVAPSKKKDKKKKKKRQSLTIDDEQRSSTKEEPTAEFSSDHVPEPSAVDESATTPSASEEQQKPETDITETVTQTAAEPTPSSASEEPENIAEAPSNESTQEPAAEEAQTAKSKKKAKKDKKKRKSVSFEIGEPLTQQSEPGHPTATPGETVTPHEGPKPGDKPTSPKDSSEEFQSGEAVPESPQDSAGIVTQPEQPEPTAEATVVTEQHKQVTEPSLVSINEEQAVVEETVAPPVVDEASQLQEQKVSSETLWSETQRDVVKSFQDAESLEEEKGETAVSPSLENNEGTKPGAWVEQAEFEPQTPTDDGEQGVGPSKSKKNKKKKKRNTLESTEDVPVIPPGPSKIELLESTPVLETEETHDIVEPDTTVSENVHEEEKPEDEFGGFMSAKAKKKAKKKDKKRQSKILDSANDATNTAESAPDISEQAPLETASGEADGPDATFSQETSETISTEAKSSEPSPETALTPAEDDGKENQSHDTEPHGGNDKDLTWTDHMVSSQVEQQQGTPSDRPSEPAPETEPISTREAATSIDVEQLDNNADDASPAVNDRLERSGEEGTRVKKEIVSEEPEVQYEGLLEIPREEKAEISSQGEDTIQVKSDAEVEESVKATVEGTPEDSMSQEDAPISVLDGGDATTKDQFTSIEVNDPSQSKDILEPENEELPLPIPGKKKKAQQETKIDETSQDDSVDAVQEESPTSREMTDTGLPVAESQADPIAEPFHELPEPQKAVEIAVEDKSMQETLKFKQDVTPAEDVFQEPPALGRKKSKKDKKKDLLAQNTAVESRENKFKEKQLATEEPLITPSDARTTVLATPVFTQALETPTKTTVDAGERELHLSAVQSTVPVEDNINALETSGAQTLESFRTLEAPEQPLERNILLNDYAAKTPEELPAVEKSATYETATEPIIEEAALSHKNSKKKSKKAKKQAQEQQEKSTTPTPAEHGEESIVETTAAIPSTPGPAENSDDIPEANISEEQVAQLEHSEQLVLSDAARPQERLGQTPNMDNQTDDVQSTEQGKEGNVQAEPRQVESEDPIESQPGSTAAVARKLSKKDRRKAKKKSAKDAIEPSDEPELRNPTEPIGASCSTSNQAKIDQDQFLTVASDKQMVEEVPRPLEVEPAASEVYQGATDENDWPAIDWEKGKVEFKEQTPLSSPEAHAVPFEPAIAEFDETAIPEGLLRRQSLSREEQLAGGKDGSSQHTRADEIAAPQEGAVMIEPSAVAETEQSAGLQAKSVSSQGAPKTIQDDMQHPENRLARDQTKSETGVVPSKQSKIGSIFPDLERGSFRRPVPGQVLMPVKDRAEDETIDQNADDNSAIKVSEAPIPAGEPEESHLQSQQDEKGPEPTTTVSTLDLSLEEPTKMQDTSNTPVNLAVDIEVDPSYNVSVISDGLVNETKSIEIEWKTDGDKGTQEAETPLYAPLPVHEQKSSLVSQASPLDMDRDEPIPRNDSSCGLRRSPSIHGRHNHPPRTWSLEDTPITKAVTPPLFGGPVGATADMSSPPRTPLQPIAEQEPEVRVEQASGFRSMVSEHGTPRLEMKPEHVLPRPETPIRKFTDNALARQTWPVAENDIFKSSEDEDAALTVKKQRPGNKWPAEVLKTPDKGMPILRPSSVSSVKSVQSTHSVTGGQRSLRRTSRNTSGDLRAASQAQESHGTQPHATPQPPQPPPSDLNIEHIASSSSYDPVTDKGKRPIRAMTDVYEGWGESPSSPRSPSRPPSIRHRRSMQHLQELEARLDQLISENRLLIAAREAAEDKLRNASVARRKSDHTLNERSADLRDREAEVEKLKKSVEWLQKEVTRLTEENEGLITTNSNLTAAHAKEIESVRESSSRQLDDLRSRYEQLSMEVQNTVRHEIETALARKDNELRRLREELETARDKVSQLQQQIAASLHDNVLVFRDEDYFDAACQKLCGHVQQWVLRFSKHSDHRRCRKLAEIQDEKIADRFDNAILDGYDTDTYLADRVRRRDIFMSVVMTMVWEFVFTRYLFGMDREQRQKLKSLEKQLNEVGPRSAVHRWRAITLTLLSKRPAFARQRESDTEAVALEIFETLSRLLPPPSHVEVQLLESLRKVLRVAVNLSIEMRTQLAEYIMLPPLQPEYDTNGDLARQVYFNASLMNERSGETTSNEELESQQAVVRVVLFPLVVKKGNDTGEGEDEVVVCPAQVLVARPDKDPRASKIFSSDRMSLDGTKSVHSVAPSSTMDISNVI</sequence>
<gene>
    <name evidence="4" type="primary">lah</name>
    <name type="ORF">AFUA_2G08060</name>
</gene>
<keyword id="KW-0175">Coiled coil</keyword>
<keyword id="KW-1185">Reference proteome</keyword>
<keyword id="KW-0843">Virulence</keyword>
<protein>
    <recommendedName>
        <fullName evidence="4">Leashin</fullName>
    </recommendedName>
</protein>
<evidence type="ECO:0000255" key="1"/>
<evidence type="ECO:0000256" key="2">
    <source>
        <dbReference type="SAM" id="MobiDB-lite"/>
    </source>
</evidence>
<evidence type="ECO:0000269" key="3">
    <source>
    </source>
</evidence>
<evidence type="ECO:0000303" key="4">
    <source>
    </source>
</evidence>
<evidence type="ECO:0000305" key="5">
    <source>
    </source>
</evidence>
<proteinExistence type="evidence at protein level"/>
<accession>Q4X212</accession>
<dbReference type="EMBL" id="AAHF01000001">
    <property type="protein sequence ID" value="EAL93103.1"/>
    <property type="molecule type" value="Genomic_DNA"/>
</dbReference>
<dbReference type="RefSeq" id="XP_755141.1">
    <property type="nucleotide sequence ID" value="XM_750048.1"/>
</dbReference>
<dbReference type="SMR" id="Q4X212"/>
<dbReference type="STRING" id="330879.Q4X212"/>
<dbReference type="EnsemblFungi" id="EAL93103">
    <property type="protein sequence ID" value="EAL93103"/>
    <property type="gene ID" value="AFUA_2G08060"/>
</dbReference>
<dbReference type="GeneID" id="3513060"/>
<dbReference type="KEGG" id="afm:AFUA_2G08060"/>
<dbReference type="VEuPathDB" id="FungiDB:Afu2g08060"/>
<dbReference type="eggNOG" id="ENOG502QRYC">
    <property type="taxonomic scope" value="Eukaryota"/>
</dbReference>
<dbReference type="HOGENOM" id="CLU_000055_0_0_1"/>
<dbReference type="InParanoid" id="Q4X212"/>
<dbReference type="OMA" id="GMYRPYV"/>
<dbReference type="OrthoDB" id="5365701at2759"/>
<dbReference type="Proteomes" id="UP000002530">
    <property type="component" value="Chromosome 2"/>
</dbReference>
<dbReference type="GO" id="GO:0000934">
    <property type="term" value="C:porous cell septum"/>
    <property type="evidence" value="ECO:0000314"/>
    <property type="project" value="AspGD"/>
</dbReference>
<dbReference type="GO" id="GO:0009611">
    <property type="term" value="P:response to wounding"/>
    <property type="evidence" value="ECO:0000315"/>
    <property type="project" value="AspGD"/>
</dbReference>
<dbReference type="InterPro" id="IPR053268">
    <property type="entry name" value="Woronin_anchor"/>
</dbReference>
<dbReference type="PANTHER" id="PTHR40641:SF2">
    <property type="entry name" value="INVOLUCRIN REPEAT PROTEIN"/>
    <property type="match status" value="1"/>
</dbReference>
<dbReference type="PANTHER" id="PTHR40641">
    <property type="entry name" value="INVOLUCRIN REPEAT PROTEIN (AFU_ORTHOLOGUE AFUA_2G08060)"/>
    <property type="match status" value="1"/>
</dbReference>
<reference key="1">
    <citation type="journal article" date="2005" name="Nature">
        <title>Genomic sequence of the pathogenic and allergenic filamentous fungus Aspergillus fumigatus.</title>
        <authorList>
            <person name="Nierman W.C."/>
            <person name="Pain A."/>
            <person name="Anderson M.J."/>
            <person name="Wortman J.R."/>
            <person name="Kim H.S."/>
            <person name="Arroyo J."/>
            <person name="Berriman M."/>
            <person name="Abe K."/>
            <person name="Archer D.B."/>
            <person name="Bermejo C."/>
            <person name="Bennett J.W."/>
            <person name="Bowyer P."/>
            <person name="Chen D."/>
            <person name="Collins M."/>
            <person name="Coulsen R."/>
            <person name="Davies R."/>
            <person name="Dyer P.S."/>
            <person name="Farman M.L."/>
            <person name="Fedorova N."/>
            <person name="Fedorova N.D."/>
            <person name="Feldblyum T.V."/>
            <person name="Fischer R."/>
            <person name="Fosker N."/>
            <person name="Fraser A."/>
            <person name="Garcia J.L."/>
            <person name="Garcia M.J."/>
            <person name="Goble A."/>
            <person name="Goldman G.H."/>
            <person name="Gomi K."/>
            <person name="Griffith-Jones S."/>
            <person name="Gwilliam R."/>
            <person name="Haas B.J."/>
            <person name="Haas H."/>
            <person name="Harris D.E."/>
            <person name="Horiuchi H."/>
            <person name="Huang J."/>
            <person name="Humphray S."/>
            <person name="Jimenez J."/>
            <person name="Keller N."/>
            <person name="Khouri H."/>
            <person name="Kitamoto K."/>
            <person name="Kobayashi T."/>
            <person name="Konzack S."/>
            <person name="Kulkarni R."/>
            <person name="Kumagai T."/>
            <person name="Lafton A."/>
            <person name="Latge J.-P."/>
            <person name="Li W."/>
            <person name="Lord A."/>
            <person name="Lu C."/>
            <person name="Majoros W.H."/>
            <person name="May G.S."/>
            <person name="Miller B.L."/>
            <person name="Mohamoud Y."/>
            <person name="Molina M."/>
            <person name="Monod M."/>
            <person name="Mouyna I."/>
            <person name="Mulligan S."/>
            <person name="Murphy L.D."/>
            <person name="O'Neil S."/>
            <person name="Paulsen I."/>
            <person name="Penalva M.A."/>
            <person name="Pertea M."/>
            <person name="Price C."/>
            <person name="Pritchard B.L."/>
            <person name="Quail M.A."/>
            <person name="Rabbinowitsch E."/>
            <person name="Rawlins N."/>
            <person name="Rajandream M.A."/>
            <person name="Reichard U."/>
            <person name="Renauld H."/>
            <person name="Robson G.D."/>
            <person name="Rodriguez de Cordoba S."/>
            <person name="Rodriguez-Pena J.M."/>
            <person name="Ronning C.M."/>
            <person name="Rutter S."/>
            <person name="Salzberg S.L."/>
            <person name="Sanchez M."/>
            <person name="Sanchez-Ferrero J.C."/>
            <person name="Saunders D."/>
            <person name="Seeger K."/>
            <person name="Squares R."/>
            <person name="Squares S."/>
            <person name="Takeuchi M."/>
            <person name="Tekaia F."/>
            <person name="Turner G."/>
            <person name="Vazquez de Aldana C.R."/>
            <person name="Weidman J."/>
            <person name="White O."/>
            <person name="Woodward J.R."/>
            <person name="Yu J.-H."/>
            <person name="Fraser C.M."/>
            <person name="Galagan J.E."/>
            <person name="Asai K."/>
            <person name="Machida M."/>
            <person name="Hall N."/>
            <person name="Barrell B.G."/>
            <person name="Denning D.W."/>
        </authorList>
    </citation>
    <scope>NUCLEOTIDE SEQUENCE [LARGE SCALE GENOMIC DNA]</scope>
    <source>
        <strain>ATCC MYA-4609 / CBS 101355 / FGSC A1100 / Af293</strain>
    </source>
</reference>
<reference key="2">
    <citation type="journal article" date="2013" name="Mol. Microbiol.">
        <title>Woronin bodies, their impact on stress resistance and virulence of the pathogenic mould Aspergillus fumigatus and their anchoring at the septal pore of filamentous Ascomycota.</title>
        <authorList>
            <person name="Beck J."/>
            <person name="Echtenacher B."/>
            <person name="Ebel F."/>
        </authorList>
    </citation>
    <scope>FUNCTION</scope>
    <scope>SUBCELLULAR LOCATION</scope>
    <scope>DOMAIN</scope>
    <scope>SUBUNIT</scope>
</reference>
<comment type="function">
    <text evidence="3">Acts as the tether and is essential for anchoring of Woronin bodies at the septal pore (PubMed:23869404). In damaged hyphae, Woronin bodies occlude septal pores in order to separate intact from damaged compartments (PubMed:23869404).</text>
</comment>
<comment type="subunit">
    <text evidence="5">Binds directly or indirectly to the Woronin body major protein hexA.</text>
</comment>
<comment type="subcellular location">
    <subcellularLocation>
        <location evidence="3">Cell septum</location>
    </subcellularLocation>
    <text evidence="3">Localizes to the central part of the septum indicating a specific targeting to the rim of the septal pore.</text>
</comment>
<comment type="domain">
    <text evidence="3">The N-terminal domain binds to Woronin bodies in the cytoplasm and on either side of the septal pore, whereas the C-terminal domain binds to the septal pore.</text>
</comment>